<comment type="function">
    <text evidence="1">Involved in the biosynthesis of lipid A, a phosphorylated glycolipid that anchors the lipopolysaccharide to the outer membrane of the cell.</text>
</comment>
<comment type="catalytic activity">
    <reaction evidence="1">
        <text>a (3R)-hydroxyacyl-[ACP] + UDP-N-acetyl-alpha-D-glucosamine = a UDP-3-O-[(3R)-3-hydroxyacyl]-N-acetyl-alpha-D-glucosamine + holo-[ACP]</text>
        <dbReference type="Rhea" id="RHEA:67812"/>
        <dbReference type="Rhea" id="RHEA-COMP:9685"/>
        <dbReference type="Rhea" id="RHEA-COMP:9945"/>
        <dbReference type="ChEBI" id="CHEBI:57705"/>
        <dbReference type="ChEBI" id="CHEBI:64479"/>
        <dbReference type="ChEBI" id="CHEBI:78827"/>
        <dbReference type="ChEBI" id="CHEBI:173225"/>
        <dbReference type="EC" id="2.3.1.129"/>
    </reaction>
</comment>
<comment type="pathway">
    <text evidence="1">Glycolipid biosynthesis; lipid IV(A) biosynthesis; lipid IV(A) from (3R)-3-hydroxytetradecanoyl-[acyl-carrier-protein] and UDP-N-acetyl-alpha-D-glucosamine: step 1/6.</text>
</comment>
<comment type="subunit">
    <text evidence="1">Homotrimer.</text>
</comment>
<comment type="subcellular location">
    <subcellularLocation>
        <location evidence="1">Cytoplasm</location>
    </subcellularLocation>
</comment>
<comment type="similarity">
    <text evidence="1">Belongs to the transferase hexapeptide repeat family. LpxA subfamily.</text>
</comment>
<keyword id="KW-0012">Acyltransferase</keyword>
<keyword id="KW-0963">Cytoplasm</keyword>
<keyword id="KW-0441">Lipid A biosynthesis</keyword>
<keyword id="KW-0444">Lipid biosynthesis</keyword>
<keyword id="KW-0443">Lipid metabolism</keyword>
<keyword id="KW-1185">Reference proteome</keyword>
<keyword id="KW-0677">Repeat</keyword>
<keyword id="KW-0808">Transferase</keyword>
<evidence type="ECO:0000255" key="1">
    <source>
        <dbReference type="HAMAP-Rule" id="MF_00387"/>
    </source>
</evidence>
<dbReference type="EC" id="2.3.1.129" evidence="1"/>
<dbReference type="EMBL" id="AL590842">
    <property type="protein sequence ID" value="CAL19721.1"/>
    <property type="molecule type" value="Genomic_DNA"/>
</dbReference>
<dbReference type="EMBL" id="AE009952">
    <property type="protein sequence ID" value="AAM86673.1"/>
    <property type="molecule type" value="Genomic_DNA"/>
</dbReference>
<dbReference type="EMBL" id="AE017042">
    <property type="protein sequence ID" value="AAS62978.1"/>
    <property type="molecule type" value="Genomic_DNA"/>
</dbReference>
<dbReference type="PIR" id="AG0129">
    <property type="entry name" value="AG0129"/>
</dbReference>
<dbReference type="RefSeq" id="WP_002212143.1">
    <property type="nucleotide sequence ID" value="NZ_WUCM01000044.1"/>
</dbReference>
<dbReference type="RefSeq" id="YP_002346099.1">
    <property type="nucleotide sequence ID" value="NC_003143.1"/>
</dbReference>
<dbReference type="SMR" id="Q8ZH56"/>
<dbReference type="STRING" id="214092.YPO1056"/>
<dbReference type="PaxDb" id="214092-YPO1056"/>
<dbReference type="DNASU" id="1148070"/>
<dbReference type="EnsemblBacteria" id="AAS62978">
    <property type="protein sequence ID" value="AAS62978"/>
    <property type="gene ID" value="YP_2794"/>
</dbReference>
<dbReference type="GeneID" id="57977505"/>
<dbReference type="KEGG" id="ype:YPO1056"/>
<dbReference type="KEGG" id="ypk:y3123"/>
<dbReference type="KEGG" id="ypm:YP_2794"/>
<dbReference type="PATRIC" id="fig|214092.21.peg.1344"/>
<dbReference type="eggNOG" id="COG1043">
    <property type="taxonomic scope" value="Bacteria"/>
</dbReference>
<dbReference type="HOGENOM" id="CLU_061249_0_0_6"/>
<dbReference type="OMA" id="ECVTINR"/>
<dbReference type="OrthoDB" id="9807278at2"/>
<dbReference type="UniPathway" id="UPA00359">
    <property type="reaction ID" value="UER00477"/>
</dbReference>
<dbReference type="Proteomes" id="UP000000815">
    <property type="component" value="Chromosome"/>
</dbReference>
<dbReference type="Proteomes" id="UP000001019">
    <property type="component" value="Chromosome"/>
</dbReference>
<dbReference type="Proteomes" id="UP000002490">
    <property type="component" value="Chromosome"/>
</dbReference>
<dbReference type="GO" id="GO:0005737">
    <property type="term" value="C:cytoplasm"/>
    <property type="evidence" value="ECO:0007669"/>
    <property type="project" value="UniProtKB-SubCell"/>
</dbReference>
<dbReference type="GO" id="GO:0016020">
    <property type="term" value="C:membrane"/>
    <property type="evidence" value="ECO:0007669"/>
    <property type="project" value="GOC"/>
</dbReference>
<dbReference type="GO" id="GO:0008780">
    <property type="term" value="F:acyl-[acyl-carrier-protein]-UDP-N-acetylglucosamine O-acyltransferase activity"/>
    <property type="evidence" value="ECO:0007669"/>
    <property type="project" value="UniProtKB-UniRule"/>
</dbReference>
<dbReference type="GO" id="GO:0009245">
    <property type="term" value="P:lipid A biosynthetic process"/>
    <property type="evidence" value="ECO:0007669"/>
    <property type="project" value="UniProtKB-UniRule"/>
</dbReference>
<dbReference type="CDD" id="cd03351">
    <property type="entry name" value="LbH_UDP-GlcNAc_AT"/>
    <property type="match status" value="1"/>
</dbReference>
<dbReference type="FunFam" id="1.20.1180.10:FF:000001">
    <property type="entry name" value="Acyl-[acyl-carrier-protein]--UDP-N-acetylglucosamine O-acyltransferase"/>
    <property type="match status" value="1"/>
</dbReference>
<dbReference type="FunFam" id="2.160.10.10:FF:000003">
    <property type="entry name" value="Acyl-[acyl-carrier-protein]--UDP-N-acetylglucosamine O-acyltransferase"/>
    <property type="match status" value="1"/>
</dbReference>
<dbReference type="Gene3D" id="2.160.10.10">
    <property type="entry name" value="Hexapeptide repeat proteins"/>
    <property type="match status" value="1"/>
</dbReference>
<dbReference type="Gene3D" id="1.20.1180.10">
    <property type="entry name" value="Udp N-acetylglucosamine O-acyltransferase, C-terminal domain"/>
    <property type="match status" value="1"/>
</dbReference>
<dbReference type="HAMAP" id="MF_00387">
    <property type="entry name" value="LpxA"/>
    <property type="match status" value="1"/>
</dbReference>
<dbReference type="InterPro" id="IPR029098">
    <property type="entry name" value="Acetyltransf_C"/>
</dbReference>
<dbReference type="InterPro" id="IPR037157">
    <property type="entry name" value="Acetyltransf_C_sf"/>
</dbReference>
<dbReference type="InterPro" id="IPR001451">
    <property type="entry name" value="Hexapep"/>
</dbReference>
<dbReference type="InterPro" id="IPR018357">
    <property type="entry name" value="Hexapep_transf_CS"/>
</dbReference>
<dbReference type="InterPro" id="IPR010137">
    <property type="entry name" value="Lipid_A_LpxA"/>
</dbReference>
<dbReference type="InterPro" id="IPR011004">
    <property type="entry name" value="Trimer_LpxA-like_sf"/>
</dbReference>
<dbReference type="NCBIfam" id="TIGR01852">
    <property type="entry name" value="lipid_A_lpxA"/>
    <property type="match status" value="1"/>
</dbReference>
<dbReference type="NCBIfam" id="NF003657">
    <property type="entry name" value="PRK05289.1"/>
    <property type="match status" value="1"/>
</dbReference>
<dbReference type="PANTHER" id="PTHR43480">
    <property type="entry name" value="ACYL-[ACYL-CARRIER-PROTEIN]--UDP-N-ACETYLGLUCOSAMINE O-ACYLTRANSFERASE"/>
    <property type="match status" value="1"/>
</dbReference>
<dbReference type="PANTHER" id="PTHR43480:SF1">
    <property type="entry name" value="ACYL-[ACYL-CARRIER-PROTEIN]--UDP-N-ACETYLGLUCOSAMINE O-ACYLTRANSFERASE, MITOCHONDRIAL-RELATED"/>
    <property type="match status" value="1"/>
</dbReference>
<dbReference type="Pfam" id="PF13720">
    <property type="entry name" value="Acetyltransf_11"/>
    <property type="match status" value="1"/>
</dbReference>
<dbReference type="Pfam" id="PF00132">
    <property type="entry name" value="Hexapep"/>
    <property type="match status" value="2"/>
</dbReference>
<dbReference type="PIRSF" id="PIRSF000456">
    <property type="entry name" value="UDP-GlcNAc_acltr"/>
    <property type="match status" value="1"/>
</dbReference>
<dbReference type="SUPFAM" id="SSF51161">
    <property type="entry name" value="Trimeric LpxA-like enzymes"/>
    <property type="match status" value="1"/>
</dbReference>
<dbReference type="PROSITE" id="PS00101">
    <property type="entry name" value="HEXAPEP_TRANSFERASES"/>
    <property type="match status" value="2"/>
</dbReference>
<sequence>MIDKTAFIHPSSIVEEGAIIGAGVYIGPFCIVGSQVEIGAGTELKSHVVVNGITKIGCDNQIYQFASIGEANQDLKYAGEPTRVEVGDRNRIRESVTIHRGTTQGGGVTKVGCDNLLMVNTHVAHDCVIGNRCILANNAALGGHVEIDDYAIIGGMTAIHQFCVIGAHVMVGGCSGITQDVPPFVIAQGNHATPFGINIEGLKRRGFDKESLHAIRSAYKLLYRSGRTLDEVKPEIAELAEQYPVVKAFNDFFARSTRGIIR</sequence>
<feature type="chain" id="PRO_0000188081" description="Acyl-[acyl-carrier-protein]--UDP-N-acetylglucosamine O-acyltransferase">
    <location>
        <begin position="1"/>
        <end position="262"/>
    </location>
</feature>
<organism>
    <name type="scientific">Yersinia pestis</name>
    <dbReference type="NCBI Taxonomy" id="632"/>
    <lineage>
        <taxon>Bacteria</taxon>
        <taxon>Pseudomonadati</taxon>
        <taxon>Pseudomonadota</taxon>
        <taxon>Gammaproteobacteria</taxon>
        <taxon>Enterobacterales</taxon>
        <taxon>Yersiniaceae</taxon>
        <taxon>Yersinia</taxon>
    </lineage>
</organism>
<accession>Q8ZH56</accession>
<accession>Q0WHY9</accession>
<protein>
    <recommendedName>
        <fullName evidence="1">Acyl-[acyl-carrier-protein]--UDP-N-acetylglucosamine O-acyltransferase</fullName>
        <shortName evidence="1">UDP-N-acetylglucosamine acyltransferase</shortName>
        <ecNumber evidence="1">2.3.1.129</ecNumber>
    </recommendedName>
</protein>
<gene>
    <name evidence="1" type="primary">lpxA</name>
    <name type="ordered locus">YPO1056</name>
    <name type="ordered locus">y3123</name>
    <name type="ordered locus">YP_2794</name>
</gene>
<reference key="1">
    <citation type="journal article" date="2001" name="Nature">
        <title>Genome sequence of Yersinia pestis, the causative agent of plague.</title>
        <authorList>
            <person name="Parkhill J."/>
            <person name="Wren B.W."/>
            <person name="Thomson N.R."/>
            <person name="Titball R.W."/>
            <person name="Holden M.T.G."/>
            <person name="Prentice M.B."/>
            <person name="Sebaihia M."/>
            <person name="James K.D."/>
            <person name="Churcher C.M."/>
            <person name="Mungall K.L."/>
            <person name="Baker S."/>
            <person name="Basham D."/>
            <person name="Bentley S.D."/>
            <person name="Brooks K."/>
            <person name="Cerdeno-Tarraga A.-M."/>
            <person name="Chillingworth T."/>
            <person name="Cronin A."/>
            <person name="Davies R.M."/>
            <person name="Davis P."/>
            <person name="Dougan G."/>
            <person name="Feltwell T."/>
            <person name="Hamlin N."/>
            <person name="Holroyd S."/>
            <person name="Jagels K."/>
            <person name="Karlyshev A.V."/>
            <person name="Leather S."/>
            <person name="Moule S."/>
            <person name="Oyston P.C.F."/>
            <person name="Quail M.A."/>
            <person name="Rutherford K.M."/>
            <person name="Simmonds M."/>
            <person name="Skelton J."/>
            <person name="Stevens K."/>
            <person name="Whitehead S."/>
            <person name="Barrell B.G."/>
        </authorList>
    </citation>
    <scope>NUCLEOTIDE SEQUENCE [LARGE SCALE GENOMIC DNA]</scope>
    <source>
        <strain>CO-92 / Biovar Orientalis</strain>
    </source>
</reference>
<reference key="2">
    <citation type="journal article" date="2002" name="J. Bacteriol.">
        <title>Genome sequence of Yersinia pestis KIM.</title>
        <authorList>
            <person name="Deng W."/>
            <person name="Burland V."/>
            <person name="Plunkett G. III"/>
            <person name="Boutin A."/>
            <person name="Mayhew G.F."/>
            <person name="Liss P."/>
            <person name="Perna N.T."/>
            <person name="Rose D.J."/>
            <person name="Mau B."/>
            <person name="Zhou S."/>
            <person name="Schwartz D.C."/>
            <person name="Fetherston J.D."/>
            <person name="Lindler L.E."/>
            <person name="Brubaker R.R."/>
            <person name="Plano G.V."/>
            <person name="Straley S.C."/>
            <person name="McDonough K.A."/>
            <person name="Nilles M.L."/>
            <person name="Matson J.S."/>
            <person name="Blattner F.R."/>
            <person name="Perry R.D."/>
        </authorList>
    </citation>
    <scope>NUCLEOTIDE SEQUENCE [LARGE SCALE GENOMIC DNA]</scope>
    <source>
        <strain>KIM10+ / Biovar Mediaevalis</strain>
    </source>
</reference>
<reference key="3">
    <citation type="journal article" date="2004" name="DNA Res.">
        <title>Complete genome sequence of Yersinia pestis strain 91001, an isolate avirulent to humans.</title>
        <authorList>
            <person name="Song Y."/>
            <person name="Tong Z."/>
            <person name="Wang J."/>
            <person name="Wang L."/>
            <person name="Guo Z."/>
            <person name="Han Y."/>
            <person name="Zhang J."/>
            <person name="Pei D."/>
            <person name="Zhou D."/>
            <person name="Qin H."/>
            <person name="Pang X."/>
            <person name="Han Y."/>
            <person name="Zhai J."/>
            <person name="Li M."/>
            <person name="Cui B."/>
            <person name="Qi Z."/>
            <person name="Jin L."/>
            <person name="Dai R."/>
            <person name="Chen F."/>
            <person name="Li S."/>
            <person name="Ye C."/>
            <person name="Du Z."/>
            <person name="Lin W."/>
            <person name="Wang J."/>
            <person name="Yu J."/>
            <person name="Yang H."/>
            <person name="Wang J."/>
            <person name="Huang P."/>
            <person name="Yang R."/>
        </authorList>
    </citation>
    <scope>NUCLEOTIDE SEQUENCE [LARGE SCALE GENOMIC DNA]</scope>
    <source>
        <strain>91001 / Biovar Mediaevalis</strain>
    </source>
</reference>
<proteinExistence type="inferred from homology"/>
<name>LPXA_YERPE</name>